<reference key="1">
    <citation type="submission" date="2005-07" db="EMBL/GenBank/DDBJ databases">
        <title>Complete sequence of Synechococcus sp. CC9605.</title>
        <authorList>
            <consortium name="US DOE Joint Genome Institute"/>
            <person name="Copeland A."/>
            <person name="Lucas S."/>
            <person name="Lapidus A."/>
            <person name="Barry K."/>
            <person name="Detter J.C."/>
            <person name="Glavina T."/>
            <person name="Hammon N."/>
            <person name="Israni S."/>
            <person name="Pitluck S."/>
            <person name="Schmutz J."/>
            <person name="Martinez M."/>
            <person name="Larimer F."/>
            <person name="Land M."/>
            <person name="Kyrpides N."/>
            <person name="Ivanova N."/>
            <person name="Richardson P."/>
        </authorList>
    </citation>
    <scope>NUCLEOTIDE SEQUENCE [LARGE SCALE GENOMIC DNA]</scope>
    <source>
        <strain>CC9605</strain>
    </source>
</reference>
<organism>
    <name type="scientific">Synechococcus sp. (strain CC9605)</name>
    <dbReference type="NCBI Taxonomy" id="110662"/>
    <lineage>
        <taxon>Bacteria</taxon>
        <taxon>Bacillati</taxon>
        <taxon>Cyanobacteriota</taxon>
        <taxon>Cyanophyceae</taxon>
        <taxon>Synechococcales</taxon>
        <taxon>Synechococcaceae</taxon>
        <taxon>Synechococcus</taxon>
    </lineage>
</organism>
<feature type="chain" id="PRO_0000319247" description="Formate-dependent phosphoribosylglycinamide formyltransferase">
    <location>
        <begin position="1"/>
        <end position="392"/>
    </location>
</feature>
<feature type="domain" description="ATP-grasp" evidence="1">
    <location>
        <begin position="112"/>
        <end position="302"/>
    </location>
</feature>
<feature type="binding site" evidence="1">
    <location>
        <begin position="15"/>
        <end position="16"/>
    </location>
    <ligand>
        <name>N(1)-(5-phospho-beta-D-ribosyl)glycinamide</name>
        <dbReference type="ChEBI" id="CHEBI:143788"/>
    </ligand>
</feature>
<feature type="binding site" evidence="1">
    <location>
        <position position="75"/>
    </location>
    <ligand>
        <name>N(1)-(5-phospho-beta-D-ribosyl)glycinamide</name>
        <dbReference type="ChEBI" id="CHEBI:143788"/>
    </ligand>
</feature>
<feature type="binding site" evidence="1">
    <location>
        <position position="107"/>
    </location>
    <ligand>
        <name>ATP</name>
        <dbReference type="ChEBI" id="CHEBI:30616"/>
    </ligand>
</feature>
<feature type="binding site" evidence="1">
    <location>
        <position position="148"/>
    </location>
    <ligand>
        <name>ATP</name>
        <dbReference type="ChEBI" id="CHEBI:30616"/>
    </ligand>
</feature>
<feature type="binding site" evidence="1">
    <location>
        <begin position="153"/>
        <end position="158"/>
    </location>
    <ligand>
        <name>ATP</name>
        <dbReference type="ChEBI" id="CHEBI:30616"/>
    </ligand>
</feature>
<feature type="binding site" evidence="1">
    <location>
        <begin position="188"/>
        <end position="191"/>
    </location>
    <ligand>
        <name>ATP</name>
        <dbReference type="ChEBI" id="CHEBI:30616"/>
    </ligand>
</feature>
<feature type="binding site" evidence="1">
    <location>
        <position position="196"/>
    </location>
    <ligand>
        <name>ATP</name>
        <dbReference type="ChEBI" id="CHEBI:30616"/>
    </ligand>
</feature>
<feature type="binding site" evidence="1">
    <location>
        <position position="261"/>
    </location>
    <ligand>
        <name>Mg(2+)</name>
        <dbReference type="ChEBI" id="CHEBI:18420"/>
    </ligand>
</feature>
<feature type="binding site" evidence="1">
    <location>
        <position position="273"/>
    </location>
    <ligand>
        <name>Mg(2+)</name>
        <dbReference type="ChEBI" id="CHEBI:18420"/>
    </ligand>
</feature>
<feature type="binding site" evidence="1">
    <location>
        <position position="280"/>
    </location>
    <ligand>
        <name>N(1)-(5-phospho-beta-D-ribosyl)glycinamide</name>
        <dbReference type="ChEBI" id="CHEBI:143788"/>
    </ligand>
</feature>
<feature type="binding site" evidence="1">
    <location>
        <position position="350"/>
    </location>
    <ligand>
        <name>N(1)-(5-phospho-beta-D-ribosyl)glycinamide</name>
        <dbReference type="ChEBI" id="CHEBI:143788"/>
    </ligand>
</feature>
<feature type="binding site" evidence="1">
    <location>
        <begin position="357"/>
        <end position="358"/>
    </location>
    <ligand>
        <name>N(1)-(5-phospho-beta-D-ribosyl)glycinamide</name>
        <dbReference type="ChEBI" id="CHEBI:143788"/>
    </ligand>
</feature>
<accession>Q3AG69</accession>
<proteinExistence type="inferred from homology"/>
<keyword id="KW-0067">ATP-binding</keyword>
<keyword id="KW-0436">Ligase</keyword>
<keyword id="KW-0460">Magnesium</keyword>
<keyword id="KW-0479">Metal-binding</keyword>
<keyword id="KW-0547">Nucleotide-binding</keyword>
<keyword id="KW-0658">Purine biosynthesis</keyword>
<evidence type="ECO:0000255" key="1">
    <source>
        <dbReference type="HAMAP-Rule" id="MF_01643"/>
    </source>
</evidence>
<protein>
    <recommendedName>
        <fullName evidence="1">Formate-dependent phosphoribosylglycinamide formyltransferase</fullName>
        <ecNumber evidence="1">6.3.1.21</ecNumber>
    </recommendedName>
    <alternativeName>
        <fullName evidence="1">5'-phosphoribosylglycinamide transformylase 2</fullName>
    </alternativeName>
    <alternativeName>
        <fullName evidence="1">Formate-dependent GAR transformylase</fullName>
    </alternativeName>
    <alternativeName>
        <fullName evidence="1">GAR transformylase 2</fullName>
        <shortName evidence="1">GART 2</shortName>
    </alternativeName>
    <alternativeName>
        <fullName evidence="1">Non-folate glycinamide ribonucleotide transformylase</fullName>
    </alternativeName>
    <alternativeName>
        <fullName evidence="1">Phosphoribosylglycinamide formyltransferase 2</fullName>
    </alternativeName>
</protein>
<name>PURT_SYNSC</name>
<comment type="function">
    <text evidence="1">Involved in the de novo purine biosynthesis. Catalyzes the transfer of formate to 5-phospho-ribosyl-glycinamide (GAR), producing 5-phospho-ribosyl-N-formylglycinamide (FGAR). Formate is provided by PurU via hydrolysis of 10-formyl-tetrahydrofolate.</text>
</comment>
<comment type="catalytic activity">
    <reaction evidence="1">
        <text>N(1)-(5-phospho-beta-D-ribosyl)glycinamide + formate + ATP = N(2)-formyl-N(1)-(5-phospho-beta-D-ribosyl)glycinamide + ADP + phosphate + H(+)</text>
        <dbReference type="Rhea" id="RHEA:24829"/>
        <dbReference type="ChEBI" id="CHEBI:15378"/>
        <dbReference type="ChEBI" id="CHEBI:15740"/>
        <dbReference type="ChEBI" id="CHEBI:30616"/>
        <dbReference type="ChEBI" id="CHEBI:43474"/>
        <dbReference type="ChEBI" id="CHEBI:143788"/>
        <dbReference type="ChEBI" id="CHEBI:147286"/>
        <dbReference type="ChEBI" id="CHEBI:456216"/>
        <dbReference type="EC" id="6.3.1.21"/>
    </reaction>
    <physiologicalReaction direction="left-to-right" evidence="1">
        <dbReference type="Rhea" id="RHEA:24830"/>
    </physiologicalReaction>
</comment>
<comment type="pathway">
    <text evidence="1">Purine metabolism; IMP biosynthesis via de novo pathway; N(2)-formyl-N(1)-(5-phospho-D-ribosyl)glycinamide from N(1)-(5-phospho-D-ribosyl)glycinamide (formate route): step 1/1.</text>
</comment>
<comment type="subunit">
    <text evidence="1">Homodimer.</text>
</comment>
<comment type="similarity">
    <text evidence="1">Belongs to the PurK/PurT family.</text>
</comment>
<dbReference type="EC" id="6.3.1.21" evidence="1"/>
<dbReference type="EMBL" id="CP000110">
    <property type="protein sequence ID" value="ABB36413.1"/>
    <property type="molecule type" value="Genomic_DNA"/>
</dbReference>
<dbReference type="RefSeq" id="WP_011365607.1">
    <property type="nucleotide sequence ID" value="NC_007516.1"/>
</dbReference>
<dbReference type="SMR" id="Q3AG69"/>
<dbReference type="STRING" id="110662.Syncc9605_2688"/>
<dbReference type="KEGG" id="syd:Syncc9605_2688"/>
<dbReference type="eggNOG" id="COG0027">
    <property type="taxonomic scope" value="Bacteria"/>
</dbReference>
<dbReference type="HOGENOM" id="CLU_011534_1_3_3"/>
<dbReference type="OrthoDB" id="9804625at2"/>
<dbReference type="UniPathway" id="UPA00074">
    <property type="reaction ID" value="UER00127"/>
</dbReference>
<dbReference type="GO" id="GO:0005829">
    <property type="term" value="C:cytosol"/>
    <property type="evidence" value="ECO:0007669"/>
    <property type="project" value="TreeGrafter"/>
</dbReference>
<dbReference type="GO" id="GO:0005524">
    <property type="term" value="F:ATP binding"/>
    <property type="evidence" value="ECO:0007669"/>
    <property type="project" value="UniProtKB-UniRule"/>
</dbReference>
<dbReference type="GO" id="GO:0000287">
    <property type="term" value="F:magnesium ion binding"/>
    <property type="evidence" value="ECO:0007669"/>
    <property type="project" value="InterPro"/>
</dbReference>
<dbReference type="GO" id="GO:0043815">
    <property type="term" value="F:phosphoribosylglycinamide formyltransferase 2 activity"/>
    <property type="evidence" value="ECO:0007669"/>
    <property type="project" value="UniProtKB-UniRule"/>
</dbReference>
<dbReference type="GO" id="GO:0004644">
    <property type="term" value="F:phosphoribosylglycinamide formyltransferase activity"/>
    <property type="evidence" value="ECO:0007669"/>
    <property type="project" value="InterPro"/>
</dbReference>
<dbReference type="GO" id="GO:0006189">
    <property type="term" value="P:'de novo' IMP biosynthetic process"/>
    <property type="evidence" value="ECO:0007669"/>
    <property type="project" value="UniProtKB-UniRule"/>
</dbReference>
<dbReference type="Gene3D" id="3.40.50.20">
    <property type="match status" value="1"/>
</dbReference>
<dbReference type="Gene3D" id="3.30.1490.20">
    <property type="entry name" value="ATP-grasp fold, A domain"/>
    <property type="match status" value="1"/>
</dbReference>
<dbReference type="Gene3D" id="3.30.470.20">
    <property type="entry name" value="ATP-grasp fold, B domain"/>
    <property type="match status" value="1"/>
</dbReference>
<dbReference type="HAMAP" id="MF_01643">
    <property type="entry name" value="PurT"/>
    <property type="match status" value="1"/>
</dbReference>
<dbReference type="InterPro" id="IPR011761">
    <property type="entry name" value="ATP-grasp"/>
</dbReference>
<dbReference type="InterPro" id="IPR003135">
    <property type="entry name" value="ATP-grasp_carboxylate-amine"/>
</dbReference>
<dbReference type="InterPro" id="IPR013815">
    <property type="entry name" value="ATP_grasp_subdomain_1"/>
</dbReference>
<dbReference type="InterPro" id="IPR016185">
    <property type="entry name" value="PreATP-grasp_dom_sf"/>
</dbReference>
<dbReference type="InterPro" id="IPR005862">
    <property type="entry name" value="PurT"/>
</dbReference>
<dbReference type="InterPro" id="IPR054350">
    <property type="entry name" value="PurT/PurK_preATP-grasp"/>
</dbReference>
<dbReference type="InterPro" id="IPR048740">
    <property type="entry name" value="PurT_C"/>
</dbReference>
<dbReference type="InterPro" id="IPR011054">
    <property type="entry name" value="Rudment_hybrid_motif"/>
</dbReference>
<dbReference type="NCBIfam" id="NF006766">
    <property type="entry name" value="PRK09288.1"/>
    <property type="match status" value="1"/>
</dbReference>
<dbReference type="NCBIfam" id="TIGR01142">
    <property type="entry name" value="purT"/>
    <property type="match status" value="1"/>
</dbReference>
<dbReference type="PANTHER" id="PTHR43055">
    <property type="entry name" value="FORMATE-DEPENDENT PHOSPHORIBOSYLGLYCINAMIDE FORMYLTRANSFERASE"/>
    <property type="match status" value="1"/>
</dbReference>
<dbReference type="PANTHER" id="PTHR43055:SF1">
    <property type="entry name" value="FORMATE-DEPENDENT PHOSPHORIBOSYLGLYCINAMIDE FORMYLTRANSFERASE"/>
    <property type="match status" value="1"/>
</dbReference>
<dbReference type="Pfam" id="PF02222">
    <property type="entry name" value="ATP-grasp"/>
    <property type="match status" value="1"/>
</dbReference>
<dbReference type="Pfam" id="PF21244">
    <property type="entry name" value="PurT_C"/>
    <property type="match status" value="1"/>
</dbReference>
<dbReference type="Pfam" id="PF22660">
    <property type="entry name" value="RS_preATP-grasp-like"/>
    <property type="match status" value="1"/>
</dbReference>
<dbReference type="SUPFAM" id="SSF56059">
    <property type="entry name" value="Glutathione synthetase ATP-binding domain-like"/>
    <property type="match status" value="1"/>
</dbReference>
<dbReference type="SUPFAM" id="SSF52440">
    <property type="entry name" value="PreATP-grasp domain"/>
    <property type="match status" value="1"/>
</dbReference>
<dbReference type="SUPFAM" id="SSF51246">
    <property type="entry name" value="Rudiment single hybrid motif"/>
    <property type="match status" value="1"/>
</dbReference>
<dbReference type="PROSITE" id="PS50975">
    <property type="entry name" value="ATP_GRASP"/>
    <property type="match status" value="1"/>
</dbReference>
<sequence length="392" mass="41742">MPSFPRTVMLLGSGELGKEVAIAAQRLGCRVIACDRYAGAPAMQVADVAEVLPMTDADALLEVVRRHQPDVVIPEIEALAVHALAELEQEGITVIPTARATAVTMNRDRIRDLAAGELNLRTARFAYASSAEELKAVAEPLGWPVVVKPVMSSSGKGQSVVDCADDLPKAWEAAMAGARGTSTQVIVEEFLHFDLEITLLTIRQRNGETLFCAPIGHEQEGGDYQCSWQPAQLTDQQLHQAQAMAKTVTDNLGGAGLFGVEFFLCDDEVIFSELSPRPHDTGLVTLISQNLSEFELHLRAVLGLPIPAITAADAAASRVILAQTNMDSVAFEGVEQALTEADTQVLLFGKPTARPGRRMGVALARGVDRKEAQAKADRAAACVSVIPGSTAG</sequence>
<gene>
    <name evidence="1" type="primary">purT</name>
    <name type="ordered locus">Syncc9605_2688</name>
</gene>